<evidence type="ECO:0000255" key="1">
    <source>
        <dbReference type="HAMAP-Rule" id="MF_01629"/>
    </source>
</evidence>
<dbReference type="EC" id="1.4.3.5" evidence="1"/>
<dbReference type="EMBL" id="CR767821">
    <property type="protein sequence ID" value="CAH57901.1"/>
    <property type="molecule type" value="Genomic_DNA"/>
</dbReference>
<dbReference type="EMBL" id="CR925678">
    <property type="protein sequence ID" value="CAI26678.1"/>
    <property type="molecule type" value="Genomic_DNA"/>
</dbReference>
<dbReference type="RefSeq" id="WP_011154869.1">
    <property type="nucleotide sequence ID" value="NC_005295.2"/>
</dbReference>
<dbReference type="SMR" id="Q5HBZ2"/>
<dbReference type="GeneID" id="33058292"/>
<dbReference type="KEGG" id="eru:Erum1850"/>
<dbReference type="KEGG" id="erw:ERWE_CDS_01840"/>
<dbReference type="eggNOG" id="COG0259">
    <property type="taxonomic scope" value="Bacteria"/>
</dbReference>
<dbReference type="HOGENOM" id="CLU_032263_2_2_5"/>
<dbReference type="UniPathway" id="UPA01068">
    <property type="reaction ID" value="UER00304"/>
</dbReference>
<dbReference type="UniPathway" id="UPA01068">
    <property type="reaction ID" value="UER00305"/>
</dbReference>
<dbReference type="Proteomes" id="UP000001021">
    <property type="component" value="Chromosome"/>
</dbReference>
<dbReference type="GO" id="GO:0010181">
    <property type="term" value="F:FMN binding"/>
    <property type="evidence" value="ECO:0007669"/>
    <property type="project" value="UniProtKB-UniRule"/>
</dbReference>
<dbReference type="GO" id="GO:0004733">
    <property type="term" value="F:pyridoxamine phosphate oxidase activity"/>
    <property type="evidence" value="ECO:0007669"/>
    <property type="project" value="UniProtKB-UniRule"/>
</dbReference>
<dbReference type="GO" id="GO:0008615">
    <property type="term" value="P:pyridoxine biosynthetic process"/>
    <property type="evidence" value="ECO:0007669"/>
    <property type="project" value="UniProtKB-KW"/>
</dbReference>
<dbReference type="Gene3D" id="2.30.110.10">
    <property type="entry name" value="Electron Transport, Fmn-binding Protein, Chain A"/>
    <property type="match status" value="1"/>
</dbReference>
<dbReference type="HAMAP" id="MF_01629">
    <property type="entry name" value="PdxH"/>
    <property type="match status" value="1"/>
</dbReference>
<dbReference type="InterPro" id="IPR000659">
    <property type="entry name" value="Pyridox_Oxase"/>
</dbReference>
<dbReference type="InterPro" id="IPR019740">
    <property type="entry name" value="Pyridox_Oxase_CS"/>
</dbReference>
<dbReference type="InterPro" id="IPR011576">
    <property type="entry name" value="Pyridox_Oxase_N"/>
</dbReference>
<dbReference type="InterPro" id="IPR019576">
    <property type="entry name" value="Pyridoxamine_oxidase_dimer_C"/>
</dbReference>
<dbReference type="InterPro" id="IPR012349">
    <property type="entry name" value="Split_barrel_FMN-bd"/>
</dbReference>
<dbReference type="NCBIfam" id="TIGR00558">
    <property type="entry name" value="pdxH"/>
    <property type="match status" value="1"/>
</dbReference>
<dbReference type="NCBIfam" id="NF004231">
    <property type="entry name" value="PRK05679.1"/>
    <property type="match status" value="1"/>
</dbReference>
<dbReference type="PANTHER" id="PTHR10851:SF0">
    <property type="entry name" value="PYRIDOXINE-5'-PHOSPHATE OXIDASE"/>
    <property type="match status" value="1"/>
</dbReference>
<dbReference type="PANTHER" id="PTHR10851">
    <property type="entry name" value="PYRIDOXINE-5-PHOSPHATE OXIDASE"/>
    <property type="match status" value="1"/>
</dbReference>
<dbReference type="Pfam" id="PF10590">
    <property type="entry name" value="PNP_phzG_C"/>
    <property type="match status" value="1"/>
</dbReference>
<dbReference type="Pfam" id="PF01243">
    <property type="entry name" value="PNPOx_N"/>
    <property type="match status" value="1"/>
</dbReference>
<dbReference type="PIRSF" id="PIRSF000190">
    <property type="entry name" value="Pyd_amn-ph_oxd"/>
    <property type="match status" value="1"/>
</dbReference>
<dbReference type="SUPFAM" id="SSF50475">
    <property type="entry name" value="FMN-binding split barrel"/>
    <property type="match status" value="1"/>
</dbReference>
<dbReference type="PROSITE" id="PS01064">
    <property type="entry name" value="PYRIDOX_OXIDASE"/>
    <property type="match status" value="1"/>
</dbReference>
<organism>
    <name type="scientific">Ehrlichia ruminantium (strain Welgevonden)</name>
    <dbReference type="NCBI Taxonomy" id="254945"/>
    <lineage>
        <taxon>Bacteria</taxon>
        <taxon>Pseudomonadati</taxon>
        <taxon>Pseudomonadota</taxon>
        <taxon>Alphaproteobacteria</taxon>
        <taxon>Rickettsiales</taxon>
        <taxon>Anaplasmataceae</taxon>
        <taxon>Ehrlichia</taxon>
    </lineage>
</organism>
<comment type="function">
    <text evidence="1">Catalyzes the oxidation of either pyridoxine 5'-phosphate (PNP) or pyridoxamine 5'-phosphate (PMP) into pyridoxal 5'-phosphate (PLP).</text>
</comment>
<comment type="catalytic activity">
    <reaction evidence="1">
        <text>pyridoxamine 5'-phosphate + O2 + H2O = pyridoxal 5'-phosphate + H2O2 + NH4(+)</text>
        <dbReference type="Rhea" id="RHEA:15817"/>
        <dbReference type="ChEBI" id="CHEBI:15377"/>
        <dbReference type="ChEBI" id="CHEBI:15379"/>
        <dbReference type="ChEBI" id="CHEBI:16240"/>
        <dbReference type="ChEBI" id="CHEBI:28938"/>
        <dbReference type="ChEBI" id="CHEBI:58451"/>
        <dbReference type="ChEBI" id="CHEBI:597326"/>
        <dbReference type="EC" id="1.4.3.5"/>
    </reaction>
</comment>
<comment type="catalytic activity">
    <reaction evidence="1">
        <text>pyridoxine 5'-phosphate + O2 = pyridoxal 5'-phosphate + H2O2</text>
        <dbReference type="Rhea" id="RHEA:15149"/>
        <dbReference type="ChEBI" id="CHEBI:15379"/>
        <dbReference type="ChEBI" id="CHEBI:16240"/>
        <dbReference type="ChEBI" id="CHEBI:58589"/>
        <dbReference type="ChEBI" id="CHEBI:597326"/>
        <dbReference type="EC" id="1.4.3.5"/>
    </reaction>
</comment>
<comment type="cofactor">
    <cofactor evidence="1">
        <name>FMN</name>
        <dbReference type="ChEBI" id="CHEBI:58210"/>
    </cofactor>
    <text evidence="1">Binds 1 FMN per subunit.</text>
</comment>
<comment type="pathway">
    <text evidence="1">Cofactor metabolism; pyridoxal 5'-phosphate salvage; pyridoxal 5'-phosphate from pyridoxamine 5'-phosphate: step 1/1.</text>
</comment>
<comment type="pathway">
    <text evidence="1">Cofactor metabolism; pyridoxal 5'-phosphate salvage; pyridoxal 5'-phosphate from pyridoxine 5'-phosphate: step 1/1.</text>
</comment>
<comment type="subunit">
    <text evidence="1">Homodimer.</text>
</comment>
<comment type="similarity">
    <text evidence="1">Belongs to the pyridoxamine 5'-phosphate oxidase family.</text>
</comment>
<sequence length="194" mass="22760">MITKDPIDLFNIWYQEVLKNYSKDPTAMVLATCSKDLKPSARVVLLKQHSDEGFVFFTNMNSRKGKEISENPFVSLVFDWRQISKQVRIEGKIETLSPEDSDRYYATRSRGSQISACCSKQSNILEDKQEFITNVQKMTKEFMGKPVPRPSYWMGLRVVPMLIEFWQEGVDRIHTRYQYTRTDKHGWSIVELYP</sequence>
<name>PDXH_EHRRW</name>
<reference key="1">
    <citation type="journal article" date="2005" name="Proc. Natl. Acad. Sci. U.S.A.">
        <title>The genome of the heartwater agent Ehrlichia ruminantium contains multiple tandem repeats of actively variable copy number.</title>
        <authorList>
            <person name="Collins N.E."/>
            <person name="Liebenberg J."/>
            <person name="de Villiers E.P."/>
            <person name="Brayton K.A."/>
            <person name="Louw E."/>
            <person name="Pretorius A."/>
            <person name="Faber F.E."/>
            <person name="van Heerden H."/>
            <person name="Josemans A."/>
            <person name="van Kleef M."/>
            <person name="Steyn H.C."/>
            <person name="van Strijp M.F."/>
            <person name="Zweygarth E."/>
            <person name="Jongejan F."/>
            <person name="Maillard J.C."/>
            <person name="Berthier D."/>
            <person name="Botha M."/>
            <person name="Joubert F."/>
            <person name="Corton C.H."/>
            <person name="Thomson N.R."/>
            <person name="Allsopp M.T."/>
            <person name="Allsopp B.A."/>
        </authorList>
    </citation>
    <scope>NUCLEOTIDE SEQUENCE [LARGE SCALE GENOMIC DNA]</scope>
    <source>
        <strain>Welgevonden</strain>
    </source>
</reference>
<reference key="2">
    <citation type="journal article" date="2006" name="J. Bacteriol.">
        <title>Comparative genomic analysis of three strains of Ehrlichia ruminantium reveals an active process of genome size plasticity.</title>
        <authorList>
            <person name="Frutos R."/>
            <person name="Viari A."/>
            <person name="Ferraz C."/>
            <person name="Morgat A."/>
            <person name="Eychenie S."/>
            <person name="Kandassamy Y."/>
            <person name="Chantal I."/>
            <person name="Bensaid A."/>
            <person name="Coissac E."/>
            <person name="Vachiery N."/>
            <person name="Demaille J."/>
            <person name="Martinez D."/>
        </authorList>
    </citation>
    <scope>NUCLEOTIDE SEQUENCE [LARGE SCALE GENOMIC DNA]</scope>
    <source>
        <strain>Welgevonden</strain>
    </source>
</reference>
<gene>
    <name evidence="1" type="primary">pdxH</name>
    <name type="ordered locus">Erum1850</name>
    <name type="ordered locus">ERWE_CDS_01840</name>
</gene>
<keyword id="KW-0285">Flavoprotein</keyword>
<keyword id="KW-0288">FMN</keyword>
<keyword id="KW-0560">Oxidoreductase</keyword>
<keyword id="KW-0664">Pyridoxine biosynthesis</keyword>
<feature type="chain" id="PRO_0000167704" description="Pyridoxine/pyridoxamine 5'-phosphate oxidase">
    <location>
        <begin position="1"/>
        <end position="194"/>
    </location>
</feature>
<feature type="binding site" evidence="1">
    <location>
        <begin position="42"/>
        <end position="47"/>
    </location>
    <ligand>
        <name>FMN</name>
        <dbReference type="ChEBI" id="CHEBI:58210"/>
    </ligand>
</feature>
<feature type="binding site" evidence="1">
    <location>
        <position position="47"/>
    </location>
    <ligand>
        <name>substrate</name>
    </ligand>
</feature>
<feature type="binding site" evidence="1">
    <location>
        <begin position="57"/>
        <end position="58"/>
    </location>
    <ligand>
        <name>FMN</name>
        <dbReference type="ChEBI" id="CHEBI:58210"/>
    </ligand>
</feature>
<feature type="binding site" evidence="1">
    <location>
        <position position="63"/>
    </location>
    <ligand>
        <name>FMN</name>
        <dbReference type="ChEBI" id="CHEBI:58210"/>
    </ligand>
</feature>
<feature type="binding site" evidence="1">
    <location>
        <position position="64"/>
    </location>
    <ligand>
        <name>FMN</name>
        <dbReference type="ChEBI" id="CHEBI:58210"/>
    </ligand>
</feature>
<feature type="binding site" evidence="1">
    <location>
        <position position="86"/>
    </location>
    <ligand>
        <name>FMN</name>
        <dbReference type="ChEBI" id="CHEBI:58210"/>
    </ligand>
</feature>
<feature type="binding site" evidence="1">
    <location>
        <position position="104"/>
    </location>
    <ligand>
        <name>substrate</name>
    </ligand>
</feature>
<feature type="binding site" evidence="1">
    <location>
        <position position="108"/>
    </location>
    <ligand>
        <name>substrate</name>
    </ligand>
</feature>
<feature type="binding site" evidence="1">
    <location>
        <position position="112"/>
    </location>
    <ligand>
        <name>substrate</name>
    </ligand>
</feature>
<feature type="binding site" evidence="1">
    <location>
        <begin position="121"/>
        <end position="122"/>
    </location>
    <ligand>
        <name>FMN</name>
        <dbReference type="ChEBI" id="CHEBI:58210"/>
    </ligand>
</feature>
<feature type="binding site" evidence="1">
    <location>
        <position position="166"/>
    </location>
    <ligand>
        <name>FMN</name>
        <dbReference type="ChEBI" id="CHEBI:58210"/>
    </ligand>
</feature>
<feature type="binding site" evidence="1">
    <location>
        <begin position="172"/>
        <end position="174"/>
    </location>
    <ligand>
        <name>substrate</name>
    </ligand>
</feature>
<feature type="binding site" evidence="1">
    <location>
        <position position="176"/>
    </location>
    <ligand>
        <name>FMN</name>
        <dbReference type="ChEBI" id="CHEBI:58210"/>
    </ligand>
</feature>
<accession>Q5HBZ2</accession>
<accession>Q5FCY3</accession>
<protein>
    <recommendedName>
        <fullName evidence="1">Pyridoxine/pyridoxamine 5'-phosphate oxidase</fullName>
        <ecNumber evidence="1">1.4.3.5</ecNumber>
    </recommendedName>
    <alternativeName>
        <fullName evidence="1">PNP/PMP oxidase</fullName>
        <shortName evidence="1">PNPOx</shortName>
    </alternativeName>
    <alternativeName>
        <fullName evidence="1">Pyridoxal 5'-phosphate synthase</fullName>
    </alternativeName>
</protein>
<proteinExistence type="inferred from homology"/>